<name>RHGB_ASPNG</name>
<proteinExistence type="evidence at protein level"/>
<sequence length="558" mass="57903">MLLDKLSVLSFLGLAPIFAAAQLSGSVGPLTSASTKAATKTCNVLDYGAKADKSTDLGAPLASAFADCKSGGLVYVPSGDYALSTWARLSGGEAWALQIDGIIYRTGTDGGNMIYIEHSSDFELFSSTSEGAMQGLGYEFHADDNWSGPRLLRLYEVTDFSVHDFILVDSPSFHFSLDTCTNGEIYNMAIRGGNHGGLDGIDVWSNNIWVHDVEVTNKDECVTVKGPSKNILIESIYCNWSGGCGMGSFGSDTNVSDITYRNIYTWSSNNMMLIKSNGGSGFVENVLLENFIGHGNAYSLDIDSYWASMSAVDGDGVQLSNITVKNWKGTEAYGAERGPVKVVCADGAPCYDITIEDFAMWTEEGDSQWYSCESAYGSGYCLQDSDDHVSYSVTTSTVSSAPSGYSATSMAADLTTDFGSTVSIPIPTIPTSFYPGATPYSALMANSASTAAASSIASHATVHSSSASVAASVPSAVAPSESIPAATSAVVSSAAAIAPSPAVGAQEGSTTSAPSFAAPSGAGNSPQGPTGASGFGEKGQQGEQGEQGEQGEQGVCYV</sequence>
<reference key="1">
    <citation type="journal article" date="1997" name="Appl. Environ. Microbiol.">
        <title>Cloning and characterization of two rhamnogalacturonan hydrolase genes from Aspergillus niger.</title>
        <authorList>
            <person name="Suykerbuyk M.E."/>
            <person name="Kester H.C."/>
            <person name="Schaap P.J."/>
            <person name="Stam H."/>
            <person name="Musters W."/>
            <person name="Visser J."/>
        </authorList>
    </citation>
    <scope>NUCLEOTIDE SEQUENCE [GENOMIC DNA]</scope>
    <scope>FUNCTION</scope>
    <scope>BIOPHYSICOCHEMICAL PROPERTIES</scope>
    <source>
        <strain>ATCC 9029 / NRRL 3 / CBS 120.49 / DSM 2466 / N400 / FGSC 732</strain>
    </source>
</reference>
<comment type="function">
    <text evidence="4">Pectinolytic enzymes consist of four classes of enzymes: pectine lyase, polygalacturonase, pectin methylesterase and rhamnogalacturonase. Hydrolyzes alpha-D-galacturonopyranosyl-(1,2)-alpha-L-rhamnopyranosyl linkages in the backbone of the hairy regions of pectins.</text>
</comment>
<comment type="catalytic activity">
    <reaction>
        <text>Endohydrolysis of alpha-D-GalA-(1-&gt;2)-alpha-L-Rha glycosidic bond in the rhamnogalacturonan I backbone with initial inversion of anomeric configuration releasing oligosaccharides with beta-D-GalA at the reducing end.</text>
        <dbReference type="EC" id="3.2.1.171"/>
    </reaction>
</comment>
<comment type="biophysicochemical properties">
    <phDependence>
        <text evidence="4">Optimum pH is 4.1.</text>
    </phDependence>
</comment>
<comment type="subcellular location">
    <subcellularLocation>
        <location evidence="1">Secreted</location>
    </subcellularLocation>
</comment>
<comment type="similarity">
    <text evidence="5">Belongs to the glycosyl hydrolase 28 family.</text>
</comment>
<accession>P87161</accession>
<protein>
    <recommendedName>
        <fullName>Rhamnogalacturonase B</fullName>
        <shortName>RGase B</shortName>
        <shortName>RHG B</shortName>
        <ecNumber>3.2.1.171</ecNumber>
    </recommendedName>
</protein>
<feature type="signal peptide" evidence="2">
    <location>
        <begin position="1"/>
        <end position="21"/>
    </location>
</feature>
<feature type="chain" id="PRO_0000394388" description="Rhamnogalacturonase B">
    <location>
        <begin position="22"/>
        <end position="558"/>
    </location>
</feature>
<feature type="region of interest" description="Disordered" evidence="3">
    <location>
        <begin position="503"/>
        <end position="558"/>
    </location>
</feature>
<feature type="compositionally biased region" description="Low complexity" evidence="3">
    <location>
        <begin position="503"/>
        <end position="526"/>
    </location>
</feature>
<feature type="active site" description="Proton donor" evidence="1">
    <location>
        <position position="219"/>
    </location>
</feature>
<feature type="active site" evidence="1">
    <location>
        <position position="294"/>
    </location>
</feature>
<feature type="glycosylation site" description="N-linked (GlcNAc...) asparagine" evidence="2">
    <location>
        <position position="145"/>
    </location>
</feature>
<feature type="glycosylation site" description="N-linked (GlcNAc...) asparagine" evidence="2">
    <location>
        <position position="239"/>
    </location>
</feature>
<feature type="glycosylation site" description="N-linked (GlcNAc...) asparagine" evidence="2">
    <location>
        <position position="254"/>
    </location>
</feature>
<feature type="glycosylation site" description="N-linked (GlcNAc...) asparagine" evidence="2">
    <location>
        <position position="321"/>
    </location>
</feature>
<feature type="disulfide bond" evidence="1">
    <location>
        <begin position="42"/>
        <end position="68"/>
    </location>
</feature>
<feature type="disulfide bond" evidence="1">
    <location>
        <begin position="221"/>
        <end position="238"/>
    </location>
</feature>
<feature type="disulfide bond" evidence="1">
    <location>
        <begin position="344"/>
        <end position="350"/>
    </location>
</feature>
<feature type="disulfide bond" evidence="1">
    <location>
        <begin position="372"/>
        <end position="381"/>
    </location>
</feature>
<gene>
    <name type="primary">rhgB</name>
</gene>
<evidence type="ECO:0000250" key="1"/>
<evidence type="ECO:0000255" key="2"/>
<evidence type="ECO:0000256" key="3">
    <source>
        <dbReference type="SAM" id="MobiDB-lite"/>
    </source>
</evidence>
<evidence type="ECO:0000269" key="4">
    <source>
    </source>
</evidence>
<evidence type="ECO:0000305" key="5"/>
<keyword id="KW-0119">Carbohydrate metabolism</keyword>
<keyword id="KW-0961">Cell wall biogenesis/degradation</keyword>
<keyword id="KW-1015">Disulfide bond</keyword>
<keyword id="KW-0325">Glycoprotein</keyword>
<keyword id="KW-0326">Glycosidase</keyword>
<keyword id="KW-0378">Hydrolase</keyword>
<keyword id="KW-0624">Polysaccharide degradation</keyword>
<keyword id="KW-0964">Secreted</keyword>
<keyword id="KW-0732">Signal</keyword>
<organism>
    <name type="scientific">Aspergillus niger</name>
    <dbReference type="NCBI Taxonomy" id="5061"/>
    <lineage>
        <taxon>Eukaryota</taxon>
        <taxon>Fungi</taxon>
        <taxon>Dikarya</taxon>
        <taxon>Ascomycota</taxon>
        <taxon>Pezizomycotina</taxon>
        <taxon>Eurotiomycetes</taxon>
        <taxon>Eurotiomycetidae</taxon>
        <taxon>Eurotiales</taxon>
        <taxon>Aspergillaceae</taxon>
        <taxon>Aspergillus</taxon>
        <taxon>Aspergillus subgen. Circumdati</taxon>
    </lineage>
</organism>
<dbReference type="EC" id="3.2.1.171"/>
<dbReference type="EMBL" id="X94221">
    <property type="protein sequence ID" value="CAA63912.1"/>
    <property type="molecule type" value="Genomic_DNA"/>
</dbReference>
<dbReference type="SMR" id="P87161"/>
<dbReference type="CAZy" id="GH28">
    <property type="family name" value="Glycoside Hydrolase Family 28"/>
</dbReference>
<dbReference type="GlyCosmos" id="P87161">
    <property type="glycosylation" value="4 sites, No reported glycans"/>
</dbReference>
<dbReference type="PaxDb" id="5061-CADANGAP00011136"/>
<dbReference type="VEuPathDB" id="FungiDB:An14g04200"/>
<dbReference type="VEuPathDB" id="FungiDB:ASPNIDRAFT2_1141671"/>
<dbReference type="VEuPathDB" id="FungiDB:ATCC64974_3630"/>
<dbReference type="VEuPathDB" id="FungiDB:M747DRAFT_3040"/>
<dbReference type="eggNOG" id="ENOG502R2FT">
    <property type="taxonomic scope" value="Eukaryota"/>
</dbReference>
<dbReference type="GO" id="GO:0005576">
    <property type="term" value="C:extracellular region"/>
    <property type="evidence" value="ECO:0007669"/>
    <property type="project" value="UniProtKB-SubCell"/>
</dbReference>
<dbReference type="GO" id="GO:0004650">
    <property type="term" value="F:polygalacturonase activity"/>
    <property type="evidence" value="ECO:0007669"/>
    <property type="project" value="InterPro"/>
</dbReference>
<dbReference type="GO" id="GO:0046576">
    <property type="term" value="F:rhamnogalacturonan alpha-L-rhamnopyranosyl-(1-&gt;4)-alpha-D-galactopyranosyluronide lyase activity"/>
    <property type="evidence" value="ECO:0000314"/>
    <property type="project" value="UniProtKB"/>
</dbReference>
<dbReference type="GO" id="GO:0071555">
    <property type="term" value="P:cell wall organization"/>
    <property type="evidence" value="ECO:0007669"/>
    <property type="project" value="UniProtKB-KW"/>
</dbReference>
<dbReference type="GO" id="GO:0045490">
    <property type="term" value="P:pectin catabolic process"/>
    <property type="evidence" value="ECO:0000314"/>
    <property type="project" value="UniProtKB"/>
</dbReference>
<dbReference type="FunFam" id="2.160.20.10:FF:000025">
    <property type="entry name" value="Probable rhamnogalacturonase B"/>
    <property type="match status" value="1"/>
</dbReference>
<dbReference type="Gene3D" id="2.160.20.10">
    <property type="entry name" value="Single-stranded right-handed beta-helix, Pectin lyase-like"/>
    <property type="match status" value="1"/>
</dbReference>
<dbReference type="InterPro" id="IPR000743">
    <property type="entry name" value="Glyco_hydro_28"/>
</dbReference>
<dbReference type="InterPro" id="IPR012334">
    <property type="entry name" value="Pectin_lyas_fold"/>
</dbReference>
<dbReference type="InterPro" id="IPR011050">
    <property type="entry name" value="Pectin_lyase_fold/virulence"/>
</dbReference>
<dbReference type="PANTHER" id="PTHR31736">
    <property type="match status" value="1"/>
</dbReference>
<dbReference type="PANTHER" id="PTHR31736:SF19">
    <property type="entry name" value="PECTIN LYASE SUPERFAMILY PROTEIN-RELATED"/>
    <property type="match status" value="1"/>
</dbReference>
<dbReference type="Pfam" id="PF00295">
    <property type="entry name" value="Glyco_hydro_28"/>
    <property type="match status" value="1"/>
</dbReference>
<dbReference type="SUPFAM" id="SSF51126">
    <property type="entry name" value="Pectin lyase-like"/>
    <property type="match status" value="1"/>
</dbReference>